<keyword id="KW-1185">Reference proteome</keyword>
<accession>Q58265</accession>
<sequence>MTNAMKIIEMLRIIDNRAKFMGIKLTMMKNLLEKYKDNKELLKEVLKLTEGTRLHELILEAYPPLEELKKEIREEEHKIKITSESGGEEKKEFCTFEGPVSLIAYIKEYLRKYYLGNNVKRIFYDIGKDYAIKLGINTYDDMITFMKKDFGEVVIEKSEPLTVVVKDNKECKNCKASEPICYLTAGFIAGCLENMTNKTYIVEVTEEKCQAVGDPYCTFVAKKSIRLD</sequence>
<name>Y855_METJA</name>
<gene>
    <name type="ordered locus">MJ0855</name>
</gene>
<organism>
    <name type="scientific">Methanocaldococcus jannaschii (strain ATCC 43067 / DSM 2661 / JAL-1 / JCM 10045 / NBRC 100440)</name>
    <name type="common">Methanococcus jannaschii</name>
    <dbReference type="NCBI Taxonomy" id="243232"/>
    <lineage>
        <taxon>Archaea</taxon>
        <taxon>Methanobacteriati</taxon>
        <taxon>Methanobacteriota</taxon>
        <taxon>Methanomada group</taxon>
        <taxon>Methanococci</taxon>
        <taxon>Methanococcales</taxon>
        <taxon>Methanocaldococcaceae</taxon>
        <taxon>Methanocaldococcus</taxon>
    </lineage>
</organism>
<dbReference type="EMBL" id="L77117">
    <property type="protein sequence ID" value="AAB98862.1"/>
    <property type="molecule type" value="Genomic_DNA"/>
</dbReference>
<dbReference type="PIR" id="G64406">
    <property type="entry name" value="G64406"/>
</dbReference>
<dbReference type="RefSeq" id="WP_010870369.1">
    <property type="nucleotide sequence ID" value="NC_000909.1"/>
</dbReference>
<dbReference type="SMR" id="Q58265"/>
<dbReference type="STRING" id="243232.MJ_0855"/>
<dbReference type="PaxDb" id="243232-MJ_0855"/>
<dbReference type="EnsemblBacteria" id="AAB98862">
    <property type="protein sequence ID" value="AAB98862"/>
    <property type="gene ID" value="MJ_0855"/>
</dbReference>
<dbReference type="GeneID" id="1451743"/>
<dbReference type="KEGG" id="mja:MJ_0855"/>
<dbReference type="eggNOG" id="arCOG01688">
    <property type="taxonomic scope" value="Archaea"/>
</dbReference>
<dbReference type="HOGENOM" id="CLU_1178130_0_0_2"/>
<dbReference type="InParanoid" id="Q58265"/>
<dbReference type="OrthoDB" id="371687at2157"/>
<dbReference type="PhylomeDB" id="Q58265"/>
<dbReference type="Proteomes" id="UP000000805">
    <property type="component" value="Chromosome"/>
</dbReference>
<dbReference type="Gene3D" id="3.30.1380.20">
    <property type="entry name" value="Trafficking protein particle complex subunit 3"/>
    <property type="match status" value="1"/>
</dbReference>
<dbReference type="InterPro" id="IPR024096">
    <property type="entry name" value="NO_sig/Golgi_transp_ligand-bd"/>
</dbReference>
<dbReference type="InterPro" id="IPR004096">
    <property type="entry name" value="V4R"/>
</dbReference>
<dbReference type="PANTHER" id="PTHR35090:SF2">
    <property type="entry name" value="ARSR FAMILY TRANSCRIPTIONAL REGULATOR"/>
    <property type="match status" value="1"/>
</dbReference>
<dbReference type="PANTHER" id="PTHR35090">
    <property type="entry name" value="DNA-DIRECTED RNA POLYMERASE SUBUNIT I"/>
    <property type="match status" value="1"/>
</dbReference>
<dbReference type="Pfam" id="PF02830">
    <property type="entry name" value="V4R"/>
    <property type="match status" value="1"/>
</dbReference>
<dbReference type="SMART" id="SM00989">
    <property type="entry name" value="V4R"/>
    <property type="match status" value="1"/>
</dbReference>
<dbReference type="SUPFAM" id="SSF111126">
    <property type="entry name" value="Ligand-binding domain in the NO signalling and Golgi transport"/>
    <property type="match status" value="1"/>
</dbReference>
<reference key="1">
    <citation type="journal article" date="1996" name="Science">
        <title>Complete genome sequence of the methanogenic archaeon, Methanococcus jannaschii.</title>
        <authorList>
            <person name="Bult C.J."/>
            <person name="White O."/>
            <person name="Olsen G.J."/>
            <person name="Zhou L."/>
            <person name="Fleischmann R.D."/>
            <person name="Sutton G.G."/>
            <person name="Blake J.A."/>
            <person name="FitzGerald L.M."/>
            <person name="Clayton R.A."/>
            <person name="Gocayne J.D."/>
            <person name="Kerlavage A.R."/>
            <person name="Dougherty B.A."/>
            <person name="Tomb J.-F."/>
            <person name="Adams M.D."/>
            <person name="Reich C.I."/>
            <person name="Overbeek R."/>
            <person name="Kirkness E.F."/>
            <person name="Weinstock K.G."/>
            <person name="Merrick J.M."/>
            <person name="Glodek A."/>
            <person name="Scott J.L."/>
            <person name="Geoghagen N.S.M."/>
            <person name="Weidman J.F."/>
            <person name="Fuhrmann J.L."/>
            <person name="Nguyen D."/>
            <person name="Utterback T.R."/>
            <person name="Kelley J.M."/>
            <person name="Peterson J.D."/>
            <person name="Sadow P.W."/>
            <person name="Hanna M.C."/>
            <person name="Cotton M.D."/>
            <person name="Roberts K.M."/>
            <person name="Hurst M.A."/>
            <person name="Kaine B.P."/>
            <person name="Borodovsky M."/>
            <person name="Klenk H.-P."/>
            <person name="Fraser C.M."/>
            <person name="Smith H.O."/>
            <person name="Woese C.R."/>
            <person name="Venter J.C."/>
        </authorList>
    </citation>
    <scope>NUCLEOTIDE SEQUENCE [LARGE SCALE GENOMIC DNA]</scope>
    <source>
        <strain>ATCC 43067 / DSM 2661 / JAL-1 / JCM 10045 / NBRC 100440</strain>
    </source>
</reference>
<protein>
    <recommendedName>
        <fullName>Uncharacterized protein MJ0855</fullName>
    </recommendedName>
</protein>
<proteinExistence type="predicted"/>
<feature type="chain" id="PRO_0000107079" description="Uncharacterized protein MJ0855">
    <location>
        <begin position="1"/>
        <end position="228"/>
    </location>
</feature>